<protein>
    <recommendedName>
        <fullName>Trp operon repressor</fullName>
    </recommendedName>
</protein>
<proteinExistence type="evidence at protein level"/>
<keyword id="KW-0002">3D-structure</keyword>
<keyword id="KW-0963">Cytoplasm</keyword>
<keyword id="KW-0238">DNA-binding</keyword>
<keyword id="KW-1185">Reference proteome</keyword>
<keyword id="KW-0678">Repressor</keyword>
<keyword id="KW-0804">Transcription</keyword>
<keyword id="KW-0805">Transcription regulation</keyword>
<gene>
    <name type="primary">trpR</name>
    <name type="ordered locus">Z5995</name>
    <name type="ordered locus">ECs5351</name>
</gene>
<name>TRPR_ECO57</name>
<feature type="initiator methionine" description="Removed" evidence="2">
    <location>
        <position position="1"/>
    </location>
</feature>
<feature type="chain" id="PRO_0000196495" description="Trp operon repressor">
    <location>
        <begin position="2"/>
        <end position="108"/>
    </location>
</feature>
<feature type="DNA-binding region" evidence="1">
    <location>
        <begin position="68"/>
        <end position="91"/>
    </location>
</feature>
<feature type="strand" evidence="4">
    <location>
        <begin position="13"/>
        <end position="16"/>
    </location>
</feature>
<feature type="helix" evidence="4">
    <location>
        <begin position="17"/>
        <end position="32"/>
    </location>
</feature>
<feature type="helix" evidence="4">
    <location>
        <begin position="36"/>
        <end position="42"/>
    </location>
</feature>
<feature type="helix" evidence="4">
    <location>
        <begin position="45"/>
        <end position="63"/>
    </location>
</feature>
<feature type="turn" evidence="4">
    <location>
        <begin position="68"/>
        <end position="70"/>
    </location>
</feature>
<feature type="strand" evidence="4">
    <location>
        <begin position="75"/>
        <end position="81"/>
    </location>
</feature>
<feature type="turn" evidence="4">
    <location>
        <begin position="89"/>
        <end position="91"/>
    </location>
</feature>
<feature type="helix" evidence="4">
    <location>
        <begin position="93"/>
        <end position="104"/>
    </location>
</feature>
<evidence type="ECO:0000250" key="1"/>
<evidence type="ECO:0000250" key="2">
    <source>
        <dbReference type="UniProtKB" id="P0A881"/>
    </source>
</evidence>
<evidence type="ECO:0000305" key="3"/>
<evidence type="ECO:0007829" key="4">
    <source>
        <dbReference type="PDB" id="2XDI"/>
    </source>
</evidence>
<reference key="1">
    <citation type="journal article" date="2001" name="Nature">
        <title>Genome sequence of enterohaemorrhagic Escherichia coli O157:H7.</title>
        <authorList>
            <person name="Perna N.T."/>
            <person name="Plunkett G. III"/>
            <person name="Burland V."/>
            <person name="Mau B."/>
            <person name="Glasner J.D."/>
            <person name="Rose D.J."/>
            <person name="Mayhew G.F."/>
            <person name="Evans P.S."/>
            <person name="Gregor J."/>
            <person name="Kirkpatrick H.A."/>
            <person name="Posfai G."/>
            <person name="Hackett J."/>
            <person name="Klink S."/>
            <person name="Boutin A."/>
            <person name="Shao Y."/>
            <person name="Miller L."/>
            <person name="Grotbeck E.J."/>
            <person name="Davis N.W."/>
            <person name="Lim A."/>
            <person name="Dimalanta E.T."/>
            <person name="Potamousis K."/>
            <person name="Apodaca J."/>
            <person name="Anantharaman T.S."/>
            <person name="Lin J."/>
            <person name="Yen G."/>
            <person name="Schwartz D.C."/>
            <person name="Welch R.A."/>
            <person name="Blattner F.R."/>
        </authorList>
    </citation>
    <scope>NUCLEOTIDE SEQUENCE [LARGE SCALE GENOMIC DNA]</scope>
    <source>
        <strain>O157:H7 / EDL933 / ATCC 700927 / EHEC</strain>
    </source>
</reference>
<reference key="2">
    <citation type="journal article" date="2001" name="DNA Res.">
        <title>Complete genome sequence of enterohemorrhagic Escherichia coli O157:H7 and genomic comparison with a laboratory strain K-12.</title>
        <authorList>
            <person name="Hayashi T."/>
            <person name="Makino K."/>
            <person name="Ohnishi M."/>
            <person name="Kurokawa K."/>
            <person name="Ishii K."/>
            <person name="Yokoyama K."/>
            <person name="Han C.-G."/>
            <person name="Ohtsubo E."/>
            <person name="Nakayama K."/>
            <person name="Murata T."/>
            <person name="Tanaka M."/>
            <person name="Tobe T."/>
            <person name="Iida T."/>
            <person name="Takami H."/>
            <person name="Honda T."/>
            <person name="Sasakawa C."/>
            <person name="Ogasawara N."/>
            <person name="Yasunaga T."/>
            <person name="Kuhara S."/>
            <person name="Shiba T."/>
            <person name="Hattori M."/>
            <person name="Shinagawa H."/>
        </authorList>
    </citation>
    <scope>NUCLEOTIDE SEQUENCE [LARGE SCALE GENOMIC DNA]</scope>
    <source>
        <strain>O157:H7 / Sakai / RIMD 0509952 / EHEC</strain>
    </source>
</reference>
<comment type="function">
    <text evidence="1">This protein is an aporepressor. When complexed with L-tryptophan it binds the operator region of the trp operon (5'-ACTAGT-'3') and prevents the initiation of transcription. The complex also regulates trp repressor biosynthesis by binding to its regulatory region (By similarity).</text>
</comment>
<comment type="subunit">
    <text evidence="1">Homodimer.</text>
</comment>
<comment type="subcellular location">
    <subcellularLocation>
        <location evidence="1">Cytoplasm</location>
    </subcellularLocation>
</comment>
<comment type="similarity">
    <text evidence="3">Belongs to the TrpR family.</text>
</comment>
<comment type="sequence caution" evidence="3">
    <conflict type="erroneous initiation">
        <sequence resource="EMBL-CDS" id="BAB38774"/>
    </conflict>
    <text>Truncated N-terminus.</text>
</comment>
<organism>
    <name type="scientific">Escherichia coli O157:H7</name>
    <dbReference type="NCBI Taxonomy" id="83334"/>
    <lineage>
        <taxon>Bacteria</taxon>
        <taxon>Pseudomonadati</taxon>
        <taxon>Pseudomonadota</taxon>
        <taxon>Gammaproteobacteria</taxon>
        <taxon>Enterobacterales</taxon>
        <taxon>Enterobacteriaceae</taxon>
        <taxon>Escherichia</taxon>
    </lineage>
</organism>
<dbReference type="EMBL" id="AE005174">
    <property type="protein sequence ID" value="AAG59573.1"/>
    <property type="molecule type" value="Genomic_DNA"/>
</dbReference>
<dbReference type="EMBL" id="BA000007">
    <property type="protein sequence ID" value="BAB38774.2"/>
    <property type="status" value="ALT_INIT"/>
    <property type="molecule type" value="Genomic_DNA"/>
</dbReference>
<dbReference type="PIR" id="A86139">
    <property type="entry name" value="A86139"/>
</dbReference>
<dbReference type="PIR" id="G91297">
    <property type="entry name" value="G91297"/>
</dbReference>
<dbReference type="RefSeq" id="NP_313378.1">
    <property type="nucleotide sequence ID" value="NC_002695.1"/>
</dbReference>
<dbReference type="RefSeq" id="WP_000068679.1">
    <property type="nucleotide sequence ID" value="NZ_VOAI01000002.1"/>
</dbReference>
<dbReference type="PDB" id="2XDI">
    <property type="method" value="NMR"/>
    <property type="chains" value="A/B=2-108"/>
</dbReference>
<dbReference type="PDBsum" id="2XDI"/>
<dbReference type="SMR" id="P0A882"/>
<dbReference type="STRING" id="155864.Z5995"/>
<dbReference type="GeneID" id="913491"/>
<dbReference type="GeneID" id="93777452"/>
<dbReference type="KEGG" id="ece:Z5995"/>
<dbReference type="KEGG" id="ecs:ECs_5351"/>
<dbReference type="PATRIC" id="fig|386585.9.peg.5599"/>
<dbReference type="eggNOG" id="COG2973">
    <property type="taxonomic scope" value="Bacteria"/>
</dbReference>
<dbReference type="HOGENOM" id="CLU_147939_0_0_6"/>
<dbReference type="OMA" id="MSHEPEY"/>
<dbReference type="EvolutionaryTrace" id="P0A882"/>
<dbReference type="Proteomes" id="UP000000558">
    <property type="component" value="Chromosome"/>
</dbReference>
<dbReference type="Proteomes" id="UP000002519">
    <property type="component" value="Chromosome"/>
</dbReference>
<dbReference type="GO" id="GO:0005737">
    <property type="term" value="C:cytoplasm"/>
    <property type="evidence" value="ECO:0007669"/>
    <property type="project" value="UniProtKB-SubCell"/>
</dbReference>
<dbReference type="GO" id="GO:0003700">
    <property type="term" value="F:DNA-binding transcription factor activity"/>
    <property type="evidence" value="ECO:0007669"/>
    <property type="project" value="InterPro"/>
</dbReference>
<dbReference type="GO" id="GO:0003676">
    <property type="term" value="F:nucleic acid binding"/>
    <property type="evidence" value="ECO:0000269"/>
    <property type="project" value="DisProt"/>
</dbReference>
<dbReference type="GO" id="GO:0043565">
    <property type="term" value="F:sequence-specific DNA binding"/>
    <property type="evidence" value="ECO:0007669"/>
    <property type="project" value="InterPro"/>
</dbReference>
<dbReference type="GO" id="GO:0045892">
    <property type="term" value="P:negative regulation of DNA-templated transcription"/>
    <property type="evidence" value="ECO:0007669"/>
    <property type="project" value="UniProtKB-UniRule"/>
</dbReference>
<dbReference type="DisProt" id="DP00810"/>
<dbReference type="FunFam" id="1.10.1270.10:FF:000001">
    <property type="entry name" value="Trp operon repressor"/>
    <property type="match status" value="1"/>
</dbReference>
<dbReference type="Gene3D" id="1.10.1270.10">
    <property type="entry name" value="TrpR-like"/>
    <property type="match status" value="1"/>
</dbReference>
<dbReference type="HAMAP" id="MF_00475">
    <property type="entry name" value="Trp_repressor"/>
    <property type="match status" value="1"/>
</dbReference>
<dbReference type="InterPro" id="IPR000831">
    <property type="entry name" value="Trp_repress"/>
</dbReference>
<dbReference type="InterPro" id="IPR013335">
    <property type="entry name" value="Trp_repress_bac"/>
</dbReference>
<dbReference type="InterPro" id="IPR010921">
    <property type="entry name" value="Trp_repressor/repl_initiator"/>
</dbReference>
<dbReference type="InterPro" id="IPR038116">
    <property type="entry name" value="TrpR-like_sf"/>
</dbReference>
<dbReference type="NCBIfam" id="TIGR01321">
    <property type="entry name" value="TrpR"/>
    <property type="match status" value="1"/>
</dbReference>
<dbReference type="PANTHER" id="PTHR38025">
    <property type="entry name" value="TRP OPERON REPRESSOR"/>
    <property type="match status" value="1"/>
</dbReference>
<dbReference type="PANTHER" id="PTHR38025:SF1">
    <property type="entry name" value="TRP OPERON REPRESSOR"/>
    <property type="match status" value="1"/>
</dbReference>
<dbReference type="Pfam" id="PF01371">
    <property type="entry name" value="Trp_repressor"/>
    <property type="match status" value="1"/>
</dbReference>
<dbReference type="PIRSF" id="PIRSF003196">
    <property type="entry name" value="Trp_repressor"/>
    <property type="match status" value="1"/>
</dbReference>
<dbReference type="SUPFAM" id="SSF48295">
    <property type="entry name" value="TrpR-like"/>
    <property type="match status" value="1"/>
</dbReference>
<accession>P0A882</accession>
<accession>P03032</accession>
<sequence length="108" mass="12355">MAQQSPYSAAMAEQRHQEWLRFVDLLKNAYQNDLHLPLLNLMLTPDEREALGTRVRIVEELLRGEMSQRELKNELGAGIATITRGSNSLKAAPVELRQWLEEVLLKSD</sequence>